<gene>
    <name type="primary">CSTB</name>
    <name type="synonym">CST6</name>
</gene>
<accession>Q10994</accession>
<organism>
    <name type="scientific">Ovis aries</name>
    <name type="common">Sheep</name>
    <dbReference type="NCBI Taxonomy" id="9940"/>
    <lineage>
        <taxon>Eukaryota</taxon>
        <taxon>Metazoa</taxon>
        <taxon>Chordata</taxon>
        <taxon>Craniata</taxon>
        <taxon>Vertebrata</taxon>
        <taxon>Euteleostomi</taxon>
        <taxon>Mammalia</taxon>
        <taxon>Eutheria</taxon>
        <taxon>Laurasiatheria</taxon>
        <taxon>Artiodactyla</taxon>
        <taxon>Ruminantia</taxon>
        <taxon>Pecora</taxon>
        <taxon>Bovidae</taxon>
        <taxon>Caprinae</taxon>
        <taxon>Ovis</taxon>
    </lineage>
</organism>
<evidence type="ECO:0000250" key="1"/>
<evidence type="ECO:0000250" key="2">
    <source>
        <dbReference type="UniProtKB" id="P25417"/>
    </source>
</evidence>
<evidence type="ECO:0000305" key="3"/>
<reference key="1">
    <citation type="journal article" date="1996" name="Comp. Biochem. Physiol.">
        <title>The amino acid sequences, structure comparisons and inhibition kinetics of sheep cathepsin L and sheep stefin B.</title>
        <authorList>
            <person name="Ritonja A."/>
            <person name="Coetzer T.H.T."/>
            <person name="Pike R.N."/>
            <person name="Dennison C."/>
        </authorList>
    </citation>
    <scope>PROTEIN SEQUENCE</scope>
    <source>
        <tissue>Liver</tissue>
    </source>
</reference>
<comment type="function">
    <text>This is an intracellular thiol proteinase inhibitor.</text>
</comment>
<comment type="subunit">
    <text>Able to form dimers stabilized by noncovalent forces.</text>
</comment>
<comment type="subcellular location">
    <subcellularLocation>
        <location>Cytoplasm</location>
    </subcellularLocation>
</comment>
<comment type="similarity">
    <text evidence="3">Belongs to the cystatin family.</text>
</comment>
<name>CYTB_SHEEP</name>
<dbReference type="SMR" id="Q10994"/>
<dbReference type="STRING" id="9940.ENSOARP00000012223"/>
<dbReference type="MEROPS" id="I25.003"/>
<dbReference type="PaxDb" id="9940-ENSOARP00000012223"/>
<dbReference type="eggNOG" id="ENOG502SF2X">
    <property type="taxonomic scope" value="Eukaryota"/>
</dbReference>
<dbReference type="OrthoDB" id="2429551at2759"/>
<dbReference type="Proteomes" id="UP000002356">
    <property type="component" value="Unplaced"/>
</dbReference>
<dbReference type="GO" id="GO:0005829">
    <property type="term" value="C:cytosol"/>
    <property type="evidence" value="ECO:0007669"/>
    <property type="project" value="TreeGrafter"/>
</dbReference>
<dbReference type="GO" id="GO:0004869">
    <property type="term" value="F:cysteine-type endopeptidase inhibitor activity"/>
    <property type="evidence" value="ECO:0007669"/>
    <property type="project" value="UniProtKB-KW"/>
</dbReference>
<dbReference type="CDD" id="cd00042">
    <property type="entry name" value="CY"/>
    <property type="match status" value="1"/>
</dbReference>
<dbReference type="FunFam" id="3.10.450.10:FF:000001">
    <property type="entry name" value="Cystatin-A"/>
    <property type="match status" value="1"/>
</dbReference>
<dbReference type="Gene3D" id="3.10.450.10">
    <property type="match status" value="1"/>
</dbReference>
<dbReference type="InterPro" id="IPR000010">
    <property type="entry name" value="Cystatin_dom"/>
</dbReference>
<dbReference type="InterPro" id="IPR046350">
    <property type="entry name" value="Cystatin_sf"/>
</dbReference>
<dbReference type="InterPro" id="IPR018073">
    <property type="entry name" value="Prot_inh_cystat_CS"/>
</dbReference>
<dbReference type="InterPro" id="IPR001713">
    <property type="entry name" value="Prot_inh_stefin"/>
</dbReference>
<dbReference type="PANTHER" id="PTHR11414">
    <property type="entry name" value="CYSTATIN FAMILY MEMBER"/>
    <property type="match status" value="1"/>
</dbReference>
<dbReference type="PANTHER" id="PTHR11414:SF22">
    <property type="entry name" value="CYSTATIN-B"/>
    <property type="match status" value="1"/>
</dbReference>
<dbReference type="Pfam" id="PF00031">
    <property type="entry name" value="Cystatin"/>
    <property type="match status" value="1"/>
</dbReference>
<dbReference type="PRINTS" id="PR00295">
    <property type="entry name" value="STEFINA"/>
</dbReference>
<dbReference type="SMART" id="SM00043">
    <property type="entry name" value="CY"/>
    <property type="match status" value="1"/>
</dbReference>
<dbReference type="SUPFAM" id="SSF54403">
    <property type="entry name" value="Cystatin/monellin"/>
    <property type="match status" value="1"/>
</dbReference>
<dbReference type="PROSITE" id="PS00287">
    <property type="entry name" value="CYSTATIN"/>
    <property type="match status" value="1"/>
</dbReference>
<proteinExistence type="evidence at protein level"/>
<protein>
    <recommendedName>
        <fullName>Cystatin-B</fullName>
    </recommendedName>
    <alternativeName>
        <fullName>Stefin-B</fullName>
    </alternativeName>
</protein>
<keyword id="KW-0007">Acetylation</keyword>
<keyword id="KW-0963">Cytoplasm</keyword>
<keyword id="KW-0903">Direct protein sequencing</keyword>
<keyword id="KW-0646">Protease inhibitor</keyword>
<keyword id="KW-1185">Reference proteome</keyword>
<keyword id="KW-0789">Thiol protease inhibitor</keyword>
<sequence length="98" mass="11150">MMCGAPSATQPATAETQAIADKVKSQLEEKENKKFPVFKALEFKSQLVAGKNYFIKVQVDEDDFVHIRVFESLPHENKPVALTSYQTNKGRHDELTYF</sequence>
<feature type="chain" id="PRO_0000207144" description="Cystatin-B">
    <location>
        <begin position="1"/>
        <end position="98"/>
    </location>
</feature>
<feature type="short sequence motif" description="Secondary area of contact" evidence="1">
    <location>
        <begin position="46"/>
        <end position="50"/>
    </location>
</feature>
<feature type="site" description="Reactive site" evidence="1">
    <location>
        <position position="4"/>
    </location>
</feature>
<feature type="modified residue" description="N-acetylmethionine" evidence="2 3">
    <location>
        <position position="1"/>
    </location>
</feature>